<keyword id="KW-0068">Autocatalytic cleavage</keyword>
<keyword id="KW-0210">Decarboxylase</keyword>
<keyword id="KW-0456">Lyase</keyword>
<keyword id="KW-0620">Polyamine biosynthesis</keyword>
<keyword id="KW-0670">Pyruvate</keyword>
<keyword id="KW-1185">Reference proteome</keyword>
<keyword id="KW-0949">S-adenosyl-L-methionine</keyword>
<keyword id="KW-0704">Schiff base</keyword>
<keyword id="KW-0745">Spermidine biosynthesis</keyword>
<keyword id="KW-0865">Zymogen</keyword>
<gene>
    <name type="primary">speH</name>
    <name type="ordered locus">SSO0585</name>
    <name type="ORF">C21_014</name>
</gene>
<dbReference type="EC" id="4.1.1.50"/>
<dbReference type="EMBL" id="Y18930">
    <property type="protein sequence ID" value="CAB57715.1"/>
    <property type="molecule type" value="Genomic_DNA"/>
</dbReference>
<dbReference type="EMBL" id="AE006641">
    <property type="protein sequence ID" value="AAK40898.1"/>
    <property type="molecule type" value="Genomic_DNA"/>
</dbReference>
<dbReference type="PIR" id="C90205">
    <property type="entry name" value="C90205"/>
</dbReference>
<dbReference type="SMR" id="Q9UWY8"/>
<dbReference type="FunCoup" id="Q9UWY8">
    <property type="interactions" value="22"/>
</dbReference>
<dbReference type="STRING" id="273057.SSO0585"/>
<dbReference type="PaxDb" id="273057-SSO0585"/>
<dbReference type="EnsemblBacteria" id="AAK40898">
    <property type="protein sequence ID" value="AAK40898"/>
    <property type="gene ID" value="SSO0585"/>
</dbReference>
<dbReference type="KEGG" id="sso:SSO0585"/>
<dbReference type="PATRIC" id="fig|273057.12.peg.594"/>
<dbReference type="eggNOG" id="arCOG00279">
    <property type="taxonomic scope" value="Archaea"/>
</dbReference>
<dbReference type="HOGENOM" id="CLU_125470_2_1_2"/>
<dbReference type="InParanoid" id="Q9UWY8"/>
<dbReference type="PhylomeDB" id="Q9UWY8"/>
<dbReference type="BRENDA" id="4.1.1.50">
    <property type="organism ID" value="6163"/>
</dbReference>
<dbReference type="SABIO-RK" id="Q9UWY8"/>
<dbReference type="UniPathway" id="UPA00331">
    <property type="reaction ID" value="UER00451"/>
</dbReference>
<dbReference type="Proteomes" id="UP000001974">
    <property type="component" value="Chromosome"/>
</dbReference>
<dbReference type="GO" id="GO:0005829">
    <property type="term" value="C:cytosol"/>
    <property type="evidence" value="ECO:0000318"/>
    <property type="project" value="GO_Central"/>
</dbReference>
<dbReference type="GO" id="GO:0004014">
    <property type="term" value="F:adenosylmethionine decarboxylase activity"/>
    <property type="evidence" value="ECO:0000314"/>
    <property type="project" value="UniProtKB"/>
</dbReference>
<dbReference type="GO" id="GO:0008295">
    <property type="term" value="P:spermidine biosynthetic process"/>
    <property type="evidence" value="ECO:0000314"/>
    <property type="project" value="UniProtKB"/>
</dbReference>
<dbReference type="FunFam" id="3.60.90.10:FF:000005">
    <property type="entry name" value="Arginine decarboxylase proenzyme"/>
    <property type="match status" value="1"/>
</dbReference>
<dbReference type="Gene3D" id="3.60.90.10">
    <property type="entry name" value="S-adenosylmethionine decarboxylase"/>
    <property type="match status" value="1"/>
</dbReference>
<dbReference type="HAMAP" id="MF_00464">
    <property type="entry name" value="AdoMetDC_1"/>
    <property type="match status" value="1"/>
</dbReference>
<dbReference type="InterPro" id="IPR003826">
    <property type="entry name" value="AdoMetDC_fam_prok"/>
</dbReference>
<dbReference type="InterPro" id="IPR016067">
    <property type="entry name" value="S-AdoMet_deCO2ase_core"/>
</dbReference>
<dbReference type="InterPro" id="IPR017716">
    <property type="entry name" value="S-AdoMet_deCOase_pro-enz"/>
</dbReference>
<dbReference type="NCBIfam" id="TIGR03330">
    <property type="entry name" value="SAM_DCase_Bsu"/>
    <property type="match status" value="1"/>
</dbReference>
<dbReference type="PANTHER" id="PTHR33866">
    <property type="entry name" value="S-ADENOSYLMETHIONINE DECARBOXYLASE PROENZYME"/>
    <property type="match status" value="1"/>
</dbReference>
<dbReference type="PANTHER" id="PTHR33866:SF2">
    <property type="entry name" value="S-ADENOSYLMETHIONINE DECARBOXYLASE PROENZYME"/>
    <property type="match status" value="1"/>
</dbReference>
<dbReference type="Pfam" id="PF02675">
    <property type="entry name" value="AdoMet_dc"/>
    <property type="match status" value="1"/>
</dbReference>
<dbReference type="SUPFAM" id="SSF56276">
    <property type="entry name" value="S-adenosylmethionine decarboxylase"/>
    <property type="match status" value="1"/>
</dbReference>
<feature type="chain" id="PRO_0000030151" description="S-adenosylmethionine decarboxylase beta chain">
    <location>
        <begin position="1"/>
        <end position="70"/>
    </location>
</feature>
<feature type="chain" id="PRO_0000030152" description="S-adenosylmethionine decarboxylase alpha chain">
    <location>
        <begin position="71"/>
        <end position="124"/>
    </location>
</feature>
<feature type="active site" description="Schiff-base intermediate with substrate; via pyruvic acid">
    <location>
        <position position="71"/>
    </location>
</feature>
<feature type="active site" description="Proton acceptor; for processing activity" evidence="1">
    <location>
        <position position="76"/>
    </location>
</feature>
<feature type="active site" description="Proton donor; for catalytic activity" evidence="1">
    <location>
        <position position="91"/>
    </location>
</feature>
<feature type="site" description="Cleavage (non-hydrolytic); by autolysis">
    <location>
        <begin position="70"/>
        <end position="71"/>
    </location>
</feature>
<feature type="modified residue" description="Pyruvic acid (Ser); by autocatalysis" evidence="3">
    <location>
        <position position="71"/>
    </location>
</feature>
<name>SPEH_SACS2</name>
<evidence type="ECO:0000250" key="1"/>
<evidence type="ECO:0000269" key="2">
    <source>
    </source>
</evidence>
<evidence type="ECO:0000269" key="3">
    <source>
    </source>
</evidence>
<evidence type="ECO:0000305" key="4"/>
<comment type="function">
    <text evidence="3">Catalyzes the decarboxylation of S-adenosylmethionine to S-adenosylmethioninamine (dcAdoMet), the propylamine donor required for the synthesis of the polyamines spermine and spermidine from the diamine putrescine. Has no arginine decarboxylase (ArgDC) activity.</text>
</comment>
<comment type="catalytic activity">
    <reaction evidence="2 3">
        <text>S-adenosyl-L-methionine + H(+) = S-adenosyl 3-(methylsulfanyl)propylamine + CO2</text>
        <dbReference type="Rhea" id="RHEA:15981"/>
        <dbReference type="ChEBI" id="CHEBI:15378"/>
        <dbReference type="ChEBI" id="CHEBI:16526"/>
        <dbReference type="ChEBI" id="CHEBI:57443"/>
        <dbReference type="ChEBI" id="CHEBI:59789"/>
        <dbReference type="EC" id="4.1.1.50"/>
    </reaction>
</comment>
<comment type="cofactor">
    <cofactor evidence="2 3">
        <name>pyruvate</name>
        <dbReference type="ChEBI" id="CHEBI:15361"/>
    </cofactor>
    <text evidence="2 3">Binds 1 pyruvoyl group covalently per subunit.</text>
</comment>
<comment type="activity regulation">
    <text evidence="2 3">Competitively inhibited by methylglyoxal bis-guanylhydrazone. Irreversibly inhibited by NaBH(4) in vitro.</text>
</comment>
<comment type="biophysicochemical properties">
    <kinetics>
        <KM evidence="2">96 uM for S-adenosyl-L-methionine</KM>
    </kinetics>
    <phDependence>
        <text evidence="2">Optimum pH is 7.4.</text>
    </phDependence>
    <temperatureDependence>
        <text evidence="2">Optimum temperature is 75 degrees Celsius. Thermostable. Retains 20% activity after incubation at 100 degrees Celsius for 1 hour, 80% after 16 hours at 70 degrees Celsius, while no loss of activity is observed after 16 hours at 50 degrees Celsius.</text>
    </temperatureDependence>
</comment>
<comment type="pathway">
    <text>Amine and polyamine biosynthesis; S-adenosylmethioninamine biosynthesis; S-adenosylmethioninamine from S-adenosyl-L-methionine: step 1/1.</text>
</comment>
<comment type="subunit">
    <text evidence="3">Heterotetramer of two alpha and two beta chains arranged as a dimer of alpha/beta heterodimers.</text>
</comment>
<comment type="PTM">
    <text evidence="3">Is synthesized initially as an inactive proenzyme. Formation of the active enzyme involves a self-maturation process in which the active site pyruvoyl group is generated from an internal serine residue via an autocatalytic post-translational modification. Two non-identical subunits are generated from the proenzyme in this reaction, and the pyruvate is formed at the N-terminus of the alpha chain, which is derived from the carboxyl end of the proenzyme. The post-translation cleavage follows an unusual pathway, termed non-hydrolytic serinolysis, in which the side chain hydroxyl group of the serine supplies its oxygen atom to form the C-terminus of the beta chain, while the remainder of the serine residue undergoes an oxidative deamination to produce ammonia and the pyruvoyl group blocking the N-terminus of the alpha chain.</text>
</comment>
<comment type="mass spectrometry" mass="6258.0" method="Electrospray" evidence="3">
    <molecule>S-adenosylmethionine decarboxylase alpha chain</molecule>
    <text>Pyruvoyl group-containing alpha subunit.</text>
</comment>
<comment type="miscellaneous">
    <text>A chimeric protein containing the beta subunit of SSO0536 and the alpha subunit of SSO0585 (SpeH) has ArgDC activity and no AdoMetDC activity, implicating residues responsible for substrate specificity in the beta subunit. But additional factors in the alpha subunit are required for efficient cleavage and turnover.</text>
</comment>
<comment type="similarity">
    <text evidence="4">Belongs to the prokaryotic AdoMetDC family. Type 1 subfamily.</text>
</comment>
<proteinExistence type="evidence at protein level"/>
<reference key="1">
    <citation type="journal article" date="2000" name="Genome">
        <title>Gene content and organization of a 281-kbp contig from the genome of the extremely thermophilic archaeon, Sulfolobus solfataricus P2.</title>
        <authorList>
            <person name="Charlebois R.L."/>
            <person name="Singh R.K."/>
            <person name="Chan-Weiher C.C.-Y."/>
            <person name="Allard G."/>
            <person name="Chow C."/>
            <person name="Confalonieri F."/>
            <person name="Curtis B."/>
            <person name="Duguet M."/>
            <person name="Erauso G."/>
            <person name="Faguy D."/>
            <person name="Gaasterland T."/>
            <person name="Garrett R.A."/>
            <person name="Gordon P."/>
            <person name="Jeffries A.C."/>
            <person name="Kozera C."/>
            <person name="Kushwaha N."/>
            <person name="Lafleur E."/>
            <person name="Medina N."/>
            <person name="Peng X."/>
            <person name="Penny S.L."/>
            <person name="She Q."/>
            <person name="St Jean A."/>
            <person name="van der Oost J."/>
            <person name="Young F."/>
            <person name="Zivanovic Y."/>
            <person name="Doolittle W.F."/>
            <person name="Ragan M.A."/>
            <person name="Sensen C.W."/>
        </authorList>
    </citation>
    <scope>NUCLEOTIDE SEQUENCE [LARGE SCALE GENOMIC DNA]</scope>
    <source>
        <strain>ATCC 35092 / DSM 1617 / JCM 11322 / P2</strain>
    </source>
</reference>
<reference key="2">
    <citation type="journal article" date="2001" name="Proc. Natl. Acad. Sci. U.S.A.">
        <title>The complete genome of the crenarchaeon Sulfolobus solfataricus P2.</title>
        <authorList>
            <person name="She Q."/>
            <person name="Singh R.K."/>
            <person name="Confalonieri F."/>
            <person name="Zivanovic Y."/>
            <person name="Allard G."/>
            <person name="Awayez M.J."/>
            <person name="Chan-Weiher C.C.-Y."/>
            <person name="Clausen I.G."/>
            <person name="Curtis B.A."/>
            <person name="De Moors A."/>
            <person name="Erauso G."/>
            <person name="Fletcher C."/>
            <person name="Gordon P.M.K."/>
            <person name="Heikamp-de Jong I."/>
            <person name="Jeffries A.C."/>
            <person name="Kozera C.J."/>
            <person name="Medina N."/>
            <person name="Peng X."/>
            <person name="Thi-Ngoc H.P."/>
            <person name="Redder P."/>
            <person name="Schenk M.E."/>
            <person name="Theriault C."/>
            <person name="Tolstrup N."/>
            <person name="Charlebois R.L."/>
            <person name="Doolittle W.F."/>
            <person name="Duguet M."/>
            <person name="Gaasterland T."/>
            <person name="Garrett R.A."/>
            <person name="Ragan M.A."/>
            <person name="Sensen C.W."/>
            <person name="Van der Oost J."/>
        </authorList>
    </citation>
    <scope>NUCLEOTIDE SEQUENCE [LARGE SCALE GENOMIC DNA]</scope>
    <source>
        <strain>ATCC 35092 / DSM 1617 / JCM 11322 / P2</strain>
    </source>
</reference>
<reference key="3">
    <citation type="journal article" date="1991" name="Eur. J. Biochem.">
        <title>S-adenosylmethionine decarboxylase from the thermophilic archaebacterium Sulfolobus solfataricus. Purification, molecular properties and studies on the covalently bound pyruvate.</title>
        <authorList>
            <person name="Cacciapuoti G."/>
            <person name="Porcelli M."/>
            <person name="De Rosa M."/>
            <person name="Gambacorta A."/>
            <person name="Bertoldo C."/>
            <person name="Zappia V."/>
        </authorList>
    </citation>
    <scope>CATALYTIC ACTIVITY</scope>
    <scope>COFACTOR</scope>
    <scope>ACTIVITY REGULATION</scope>
    <scope>BIOPHYSICOCHEMICAL PROPERTIES</scope>
    <scope>SCHIFF BASE FORMATION</scope>
    <source>
        <strain>DSM 5833 / MT-4</strain>
    </source>
</reference>
<reference key="4">
    <citation type="journal article" date="2008" name="J. Biol. Chem.">
        <title>Crenarchaeal arginine decarboxylase evolved from an S-adenosylmethionine decarboxylase enzyme.</title>
        <authorList>
            <person name="Giles T.N."/>
            <person name="Graham D.E."/>
        </authorList>
    </citation>
    <scope>FUNCTION</scope>
    <scope>CATALYTIC ACTIVITY</scope>
    <scope>COFACTOR</scope>
    <scope>SUBSTRATE SPECIFICITY</scope>
    <scope>ACTIVITY REGULATION</scope>
    <scope>SUBUNIT</scope>
    <scope>MASS SPECTROMETRY</scope>
    <scope>SELF-PROCESSING</scope>
    <scope>CLEAVAGE SITE</scope>
    <scope>PYRUVATE FORMATION AT SER-71</scope>
    <source>
        <strain>ATCC 35092 / DSM 1617 / JCM 11322 / P2</strain>
    </source>
</reference>
<accession>Q9UWY8</accession>
<protein>
    <recommendedName>
        <fullName>S-adenosylmethionine decarboxylase proenzyme</fullName>
        <shortName>AdoMetDC</shortName>
        <shortName>SAMDC</shortName>
        <ecNumber>4.1.1.50</ecNumber>
    </recommendedName>
    <component>
        <recommendedName>
            <fullName>S-adenosylmethionine decarboxylase beta chain</fullName>
        </recommendedName>
    </component>
    <component>
        <recommendedName>
            <fullName>S-adenosylmethionine decarboxylase alpha chain</fullName>
        </recommendedName>
    </component>
</protein>
<organism>
    <name type="scientific">Saccharolobus solfataricus (strain ATCC 35092 / DSM 1617 / JCM 11322 / P2)</name>
    <name type="common">Sulfolobus solfataricus</name>
    <dbReference type="NCBI Taxonomy" id="273057"/>
    <lineage>
        <taxon>Archaea</taxon>
        <taxon>Thermoproteota</taxon>
        <taxon>Thermoprotei</taxon>
        <taxon>Sulfolobales</taxon>
        <taxon>Sulfolobaceae</taxon>
        <taxon>Saccharolobus</taxon>
    </lineage>
</organism>
<sequence length="124" mass="14044">MMMGVELAFPKVVGKQVYGSLYECDEDVLKDTKRLEQIIKEAADIGNMNILDIKSWKIGEGVSVVAIILESHITIHTWPEYRFATVDVYSCGPHTSPLNAFRYIVEKLGAKRYTINEADRSSEF</sequence>